<accession>A1SNI7</accession>
<organism>
    <name type="scientific">Nocardioides sp. (strain ATCC BAA-499 / JS614)</name>
    <dbReference type="NCBI Taxonomy" id="196162"/>
    <lineage>
        <taxon>Bacteria</taxon>
        <taxon>Bacillati</taxon>
        <taxon>Actinomycetota</taxon>
        <taxon>Actinomycetes</taxon>
        <taxon>Propionibacteriales</taxon>
        <taxon>Nocardioidaceae</taxon>
        <taxon>Nocardioides</taxon>
    </lineage>
</organism>
<protein>
    <recommendedName>
        <fullName evidence="1">Large ribosomal subunit protein bL17</fullName>
    </recommendedName>
    <alternativeName>
        <fullName evidence="3">50S ribosomal protein L17</fullName>
    </alternativeName>
</protein>
<proteinExistence type="inferred from homology"/>
<dbReference type="EMBL" id="CP000509">
    <property type="protein sequence ID" value="ABL83372.1"/>
    <property type="molecule type" value="Genomic_DNA"/>
</dbReference>
<dbReference type="RefSeq" id="WP_011757303.1">
    <property type="nucleotide sequence ID" value="NC_008699.1"/>
</dbReference>
<dbReference type="SMR" id="A1SNI7"/>
<dbReference type="STRING" id="196162.Noca_3874"/>
<dbReference type="KEGG" id="nca:Noca_3874"/>
<dbReference type="eggNOG" id="COG0203">
    <property type="taxonomic scope" value="Bacteria"/>
</dbReference>
<dbReference type="HOGENOM" id="CLU_074407_0_0_11"/>
<dbReference type="OrthoDB" id="9809073at2"/>
<dbReference type="Proteomes" id="UP000000640">
    <property type="component" value="Chromosome"/>
</dbReference>
<dbReference type="GO" id="GO:0022625">
    <property type="term" value="C:cytosolic large ribosomal subunit"/>
    <property type="evidence" value="ECO:0007669"/>
    <property type="project" value="TreeGrafter"/>
</dbReference>
<dbReference type="GO" id="GO:0003735">
    <property type="term" value="F:structural constituent of ribosome"/>
    <property type="evidence" value="ECO:0007669"/>
    <property type="project" value="InterPro"/>
</dbReference>
<dbReference type="GO" id="GO:0006412">
    <property type="term" value="P:translation"/>
    <property type="evidence" value="ECO:0007669"/>
    <property type="project" value="UniProtKB-UniRule"/>
</dbReference>
<dbReference type="FunFam" id="3.90.1030.10:FF:000001">
    <property type="entry name" value="50S ribosomal protein L17"/>
    <property type="match status" value="1"/>
</dbReference>
<dbReference type="Gene3D" id="3.90.1030.10">
    <property type="entry name" value="Ribosomal protein L17"/>
    <property type="match status" value="1"/>
</dbReference>
<dbReference type="HAMAP" id="MF_01368">
    <property type="entry name" value="Ribosomal_bL17"/>
    <property type="match status" value="1"/>
</dbReference>
<dbReference type="InterPro" id="IPR000456">
    <property type="entry name" value="Ribosomal_bL17"/>
</dbReference>
<dbReference type="InterPro" id="IPR047859">
    <property type="entry name" value="Ribosomal_bL17_CS"/>
</dbReference>
<dbReference type="InterPro" id="IPR036373">
    <property type="entry name" value="Ribosomal_bL17_sf"/>
</dbReference>
<dbReference type="NCBIfam" id="TIGR00059">
    <property type="entry name" value="L17"/>
    <property type="match status" value="1"/>
</dbReference>
<dbReference type="PANTHER" id="PTHR14413:SF16">
    <property type="entry name" value="LARGE RIBOSOMAL SUBUNIT PROTEIN BL17M"/>
    <property type="match status" value="1"/>
</dbReference>
<dbReference type="PANTHER" id="PTHR14413">
    <property type="entry name" value="RIBOSOMAL PROTEIN L17"/>
    <property type="match status" value="1"/>
</dbReference>
<dbReference type="Pfam" id="PF01196">
    <property type="entry name" value="Ribosomal_L17"/>
    <property type="match status" value="1"/>
</dbReference>
<dbReference type="SUPFAM" id="SSF64263">
    <property type="entry name" value="Prokaryotic ribosomal protein L17"/>
    <property type="match status" value="1"/>
</dbReference>
<dbReference type="PROSITE" id="PS01167">
    <property type="entry name" value="RIBOSOMAL_L17"/>
    <property type="match status" value="1"/>
</dbReference>
<keyword id="KW-1185">Reference proteome</keyword>
<keyword id="KW-0687">Ribonucleoprotein</keyword>
<keyword id="KW-0689">Ribosomal protein</keyword>
<name>RL17_NOCSJ</name>
<feature type="chain" id="PRO_1000055894" description="Large ribosomal subunit protein bL17">
    <location>
        <begin position="1"/>
        <end position="202"/>
    </location>
</feature>
<feature type="region of interest" description="Disordered" evidence="2">
    <location>
        <begin position="130"/>
        <end position="202"/>
    </location>
</feature>
<feature type="compositionally biased region" description="Low complexity" evidence="2">
    <location>
        <begin position="130"/>
        <end position="142"/>
    </location>
</feature>
<feature type="compositionally biased region" description="Acidic residues" evidence="2">
    <location>
        <begin position="143"/>
        <end position="168"/>
    </location>
</feature>
<feature type="compositionally biased region" description="Acidic residues" evidence="2">
    <location>
        <begin position="177"/>
        <end position="202"/>
    </location>
</feature>
<reference key="1">
    <citation type="submission" date="2006-12" db="EMBL/GenBank/DDBJ databases">
        <title>Complete sequence of chromosome 1 of Nocardioides sp. JS614.</title>
        <authorList>
            <person name="Copeland A."/>
            <person name="Lucas S."/>
            <person name="Lapidus A."/>
            <person name="Barry K."/>
            <person name="Detter J.C."/>
            <person name="Glavina del Rio T."/>
            <person name="Hammon N."/>
            <person name="Israni S."/>
            <person name="Dalin E."/>
            <person name="Tice H."/>
            <person name="Pitluck S."/>
            <person name="Thompson L.S."/>
            <person name="Brettin T."/>
            <person name="Bruce D."/>
            <person name="Han C."/>
            <person name="Tapia R."/>
            <person name="Schmutz J."/>
            <person name="Larimer F."/>
            <person name="Land M."/>
            <person name="Hauser L."/>
            <person name="Kyrpides N."/>
            <person name="Kim E."/>
            <person name="Mattes T."/>
            <person name="Gossett J."/>
            <person name="Richardson P."/>
        </authorList>
    </citation>
    <scope>NUCLEOTIDE SEQUENCE [LARGE SCALE GENOMIC DNA]</scope>
    <source>
        <strain>ATCC BAA-499 / JS614</strain>
    </source>
</reference>
<sequence>MPKPTKGPRLGGSPSHQRLILSNLATQLFEHGRITTTESRARALRPHAEKLITKAKKGDLHNRREVLKTIRDKSVVHTLFTEIAPTFAERPGGYTRITKIGPRKGDNAPMAVIELVTEAYKPSAPKAKKAAPAATAPAPVEEAPAEETVAEETAVEEAPTELTDEASPEESVVTEEQPVEDEAATEEPAAESTEESTEDDKA</sequence>
<comment type="subunit">
    <text evidence="1">Part of the 50S ribosomal subunit. Contacts protein L32.</text>
</comment>
<comment type="similarity">
    <text evidence="1">Belongs to the bacterial ribosomal protein bL17 family.</text>
</comment>
<gene>
    <name evidence="1" type="primary">rplQ</name>
    <name type="ordered locus">Noca_3874</name>
</gene>
<evidence type="ECO:0000255" key="1">
    <source>
        <dbReference type="HAMAP-Rule" id="MF_01368"/>
    </source>
</evidence>
<evidence type="ECO:0000256" key="2">
    <source>
        <dbReference type="SAM" id="MobiDB-lite"/>
    </source>
</evidence>
<evidence type="ECO:0000305" key="3"/>